<name>RLMH_SHEDO</name>
<proteinExistence type="inferred from homology"/>
<dbReference type="EC" id="2.1.1.177" evidence="1"/>
<dbReference type="EMBL" id="CP000302">
    <property type="protein sequence ID" value="ABE54144.1"/>
    <property type="molecule type" value="Genomic_DNA"/>
</dbReference>
<dbReference type="RefSeq" id="WP_011495309.1">
    <property type="nucleotide sequence ID" value="NC_007954.1"/>
</dbReference>
<dbReference type="SMR" id="Q12QY2"/>
<dbReference type="STRING" id="318161.Sden_0856"/>
<dbReference type="KEGG" id="sdn:Sden_0856"/>
<dbReference type="eggNOG" id="COG1576">
    <property type="taxonomic scope" value="Bacteria"/>
</dbReference>
<dbReference type="HOGENOM" id="CLU_100552_1_0_6"/>
<dbReference type="OrthoDB" id="9806643at2"/>
<dbReference type="Proteomes" id="UP000001982">
    <property type="component" value="Chromosome"/>
</dbReference>
<dbReference type="GO" id="GO:0005737">
    <property type="term" value="C:cytoplasm"/>
    <property type="evidence" value="ECO:0007669"/>
    <property type="project" value="UniProtKB-SubCell"/>
</dbReference>
<dbReference type="GO" id="GO:0070038">
    <property type="term" value="F:rRNA (pseudouridine-N3-)-methyltransferase activity"/>
    <property type="evidence" value="ECO:0007669"/>
    <property type="project" value="UniProtKB-UniRule"/>
</dbReference>
<dbReference type="CDD" id="cd18081">
    <property type="entry name" value="RlmH-like"/>
    <property type="match status" value="1"/>
</dbReference>
<dbReference type="Gene3D" id="3.40.1280.10">
    <property type="match status" value="1"/>
</dbReference>
<dbReference type="HAMAP" id="MF_00658">
    <property type="entry name" value="23SrRNA_methyltr_H"/>
    <property type="match status" value="1"/>
</dbReference>
<dbReference type="InterPro" id="IPR029028">
    <property type="entry name" value="Alpha/beta_knot_MTases"/>
</dbReference>
<dbReference type="InterPro" id="IPR003742">
    <property type="entry name" value="RlmH-like"/>
</dbReference>
<dbReference type="InterPro" id="IPR029026">
    <property type="entry name" value="tRNA_m1G_MTases_N"/>
</dbReference>
<dbReference type="NCBIfam" id="NF000984">
    <property type="entry name" value="PRK00103.1-1"/>
    <property type="match status" value="1"/>
</dbReference>
<dbReference type="NCBIfam" id="NF000986">
    <property type="entry name" value="PRK00103.1-4"/>
    <property type="match status" value="1"/>
</dbReference>
<dbReference type="NCBIfam" id="TIGR00246">
    <property type="entry name" value="tRNA_RlmH_YbeA"/>
    <property type="match status" value="1"/>
</dbReference>
<dbReference type="PANTHER" id="PTHR33603">
    <property type="entry name" value="METHYLTRANSFERASE"/>
    <property type="match status" value="1"/>
</dbReference>
<dbReference type="PANTHER" id="PTHR33603:SF1">
    <property type="entry name" value="RIBOSOMAL RNA LARGE SUBUNIT METHYLTRANSFERASE H"/>
    <property type="match status" value="1"/>
</dbReference>
<dbReference type="Pfam" id="PF02590">
    <property type="entry name" value="SPOUT_MTase"/>
    <property type="match status" value="1"/>
</dbReference>
<dbReference type="PIRSF" id="PIRSF004505">
    <property type="entry name" value="MT_bac"/>
    <property type="match status" value="1"/>
</dbReference>
<dbReference type="SUPFAM" id="SSF75217">
    <property type="entry name" value="alpha/beta knot"/>
    <property type="match status" value="1"/>
</dbReference>
<organism>
    <name type="scientific">Shewanella denitrificans (strain OS217 / ATCC BAA-1090 / DSM 15013)</name>
    <dbReference type="NCBI Taxonomy" id="318161"/>
    <lineage>
        <taxon>Bacteria</taxon>
        <taxon>Pseudomonadati</taxon>
        <taxon>Pseudomonadota</taxon>
        <taxon>Gammaproteobacteria</taxon>
        <taxon>Alteromonadales</taxon>
        <taxon>Shewanellaceae</taxon>
        <taxon>Shewanella</taxon>
    </lineage>
</organism>
<sequence>MKLQLIAVGTKMPDWVTRGFEEYQRRFPRDMALELIEIPAGKRGKNADIARILQKEGDLMLAAVAKGNHIVSLDLPGKNWTTPELAEQLSKWQLDGRDVSLLIGGPEGLSPACKEAASQSWCLSALTLPHPLVRVLVAESLYRAWSINNNHPYHRE</sequence>
<accession>Q12QY2</accession>
<reference key="1">
    <citation type="submission" date="2006-03" db="EMBL/GenBank/DDBJ databases">
        <title>Complete sequence of Shewanella denitrificans OS217.</title>
        <authorList>
            <consortium name="US DOE Joint Genome Institute"/>
            <person name="Copeland A."/>
            <person name="Lucas S."/>
            <person name="Lapidus A."/>
            <person name="Barry K."/>
            <person name="Detter J.C."/>
            <person name="Glavina del Rio T."/>
            <person name="Hammon N."/>
            <person name="Israni S."/>
            <person name="Dalin E."/>
            <person name="Tice H."/>
            <person name="Pitluck S."/>
            <person name="Brettin T."/>
            <person name="Bruce D."/>
            <person name="Han C."/>
            <person name="Tapia R."/>
            <person name="Gilna P."/>
            <person name="Kiss H."/>
            <person name="Schmutz J."/>
            <person name="Larimer F."/>
            <person name="Land M."/>
            <person name="Hauser L."/>
            <person name="Kyrpides N."/>
            <person name="Lykidis A."/>
            <person name="Richardson P."/>
        </authorList>
    </citation>
    <scope>NUCLEOTIDE SEQUENCE [LARGE SCALE GENOMIC DNA]</scope>
    <source>
        <strain>OS217 / ATCC BAA-1090 / DSM 15013</strain>
    </source>
</reference>
<comment type="function">
    <text evidence="1">Specifically methylates the pseudouridine at position 1915 (m3Psi1915) in 23S rRNA.</text>
</comment>
<comment type="catalytic activity">
    <reaction evidence="1">
        <text>pseudouridine(1915) in 23S rRNA + S-adenosyl-L-methionine = N(3)-methylpseudouridine(1915) in 23S rRNA + S-adenosyl-L-homocysteine + H(+)</text>
        <dbReference type="Rhea" id="RHEA:42752"/>
        <dbReference type="Rhea" id="RHEA-COMP:10221"/>
        <dbReference type="Rhea" id="RHEA-COMP:10222"/>
        <dbReference type="ChEBI" id="CHEBI:15378"/>
        <dbReference type="ChEBI" id="CHEBI:57856"/>
        <dbReference type="ChEBI" id="CHEBI:59789"/>
        <dbReference type="ChEBI" id="CHEBI:65314"/>
        <dbReference type="ChEBI" id="CHEBI:74486"/>
        <dbReference type="EC" id="2.1.1.177"/>
    </reaction>
</comment>
<comment type="subunit">
    <text evidence="1">Homodimer.</text>
</comment>
<comment type="subcellular location">
    <subcellularLocation>
        <location evidence="1">Cytoplasm</location>
    </subcellularLocation>
</comment>
<comment type="similarity">
    <text evidence="1">Belongs to the RNA methyltransferase RlmH family.</text>
</comment>
<feature type="chain" id="PRO_0000260604" description="Ribosomal RNA large subunit methyltransferase H">
    <location>
        <begin position="1"/>
        <end position="156"/>
    </location>
</feature>
<feature type="binding site" evidence="1">
    <location>
        <position position="73"/>
    </location>
    <ligand>
        <name>S-adenosyl-L-methionine</name>
        <dbReference type="ChEBI" id="CHEBI:59789"/>
    </ligand>
</feature>
<feature type="binding site" evidence="1">
    <location>
        <position position="104"/>
    </location>
    <ligand>
        <name>S-adenosyl-L-methionine</name>
        <dbReference type="ChEBI" id="CHEBI:59789"/>
    </ligand>
</feature>
<feature type="binding site" evidence="1">
    <location>
        <begin position="123"/>
        <end position="128"/>
    </location>
    <ligand>
        <name>S-adenosyl-L-methionine</name>
        <dbReference type="ChEBI" id="CHEBI:59789"/>
    </ligand>
</feature>
<protein>
    <recommendedName>
        <fullName evidence="1">Ribosomal RNA large subunit methyltransferase H</fullName>
        <ecNumber evidence="1">2.1.1.177</ecNumber>
    </recommendedName>
    <alternativeName>
        <fullName evidence="1">23S rRNA (pseudouridine1915-N3)-methyltransferase</fullName>
    </alternativeName>
    <alternativeName>
        <fullName evidence="1">23S rRNA m3Psi1915 methyltransferase</fullName>
    </alternativeName>
    <alternativeName>
        <fullName evidence="1">rRNA (pseudouridine-N3-)-methyltransferase RlmH</fullName>
    </alternativeName>
</protein>
<keyword id="KW-0963">Cytoplasm</keyword>
<keyword id="KW-0489">Methyltransferase</keyword>
<keyword id="KW-1185">Reference proteome</keyword>
<keyword id="KW-0698">rRNA processing</keyword>
<keyword id="KW-0949">S-adenosyl-L-methionine</keyword>
<keyword id="KW-0808">Transferase</keyword>
<evidence type="ECO:0000255" key="1">
    <source>
        <dbReference type="HAMAP-Rule" id="MF_00658"/>
    </source>
</evidence>
<gene>
    <name evidence="1" type="primary">rlmH</name>
    <name type="ordered locus">Sden_0856</name>
</gene>